<evidence type="ECO:0000255" key="1">
    <source>
        <dbReference type="HAMAP-Rule" id="MF_00441"/>
    </source>
</evidence>
<evidence type="ECO:0000305" key="2"/>
<comment type="function">
    <text evidence="1">One of the components of the core complex of photosystem II (PSII). PSII is a light-driven water:plastoquinone oxidoreductase that uses light energy to abstract electrons from H(2)O, generating O(2) and a proton gradient subsequently used for ATP formation. It consists of a core antenna complex that captures photons, and an electron transfer chain that converts photonic excitation into a charge separation.</text>
</comment>
<comment type="subunit">
    <text evidence="2">PSII is composed of 1 copy each of membrane proteins PsbA, PsbB, PsbC, PsbD, PsbE, PsbF, PsbH, PsbI, PsbJ, PsbK, PsbL, PsbM, PsbT, PsbX, PsbY, Psb30/Ycf12, peripheral proteins PsbO, CyanoQ (PsbQ), PsbU, PsbV and a large number of cofactors. It forms dimeric complexes.</text>
</comment>
<comment type="subcellular location">
    <subcellularLocation>
        <location evidence="1">Cellular thylakoid membrane</location>
        <topology evidence="1">Single-pass membrane protein</topology>
    </subcellularLocation>
</comment>
<comment type="similarity">
    <text evidence="1">Belongs to the PsbK family.</text>
</comment>
<protein>
    <recommendedName>
        <fullName evidence="1">Photosystem II reaction center protein K</fullName>
        <shortName evidence="1">PSII-K</shortName>
    </recommendedName>
</protein>
<keyword id="KW-0472">Membrane</keyword>
<keyword id="KW-0602">Photosynthesis</keyword>
<keyword id="KW-0604">Photosystem II</keyword>
<keyword id="KW-0674">Reaction center</keyword>
<keyword id="KW-1185">Reference proteome</keyword>
<keyword id="KW-0793">Thylakoid</keyword>
<keyword id="KW-0812">Transmembrane</keyword>
<keyword id="KW-1133">Transmembrane helix</keyword>
<organism>
    <name type="scientific">Prochlorococcus marinus (strain MIT 9301)</name>
    <dbReference type="NCBI Taxonomy" id="167546"/>
    <lineage>
        <taxon>Bacteria</taxon>
        <taxon>Bacillati</taxon>
        <taxon>Cyanobacteriota</taxon>
        <taxon>Cyanophyceae</taxon>
        <taxon>Synechococcales</taxon>
        <taxon>Prochlorococcaceae</taxon>
        <taxon>Prochlorococcus</taxon>
    </lineage>
</organism>
<gene>
    <name evidence="1" type="primary">psbK</name>
    <name type="ordered locus">P9301_02951</name>
</gene>
<accession>A3PAZ3</accession>
<proteinExistence type="inferred from homology"/>
<feature type="propeptide" id="PRO_0000316075" evidence="1">
    <location>
        <begin position="1"/>
        <end position="9"/>
    </location>
</feature>
<feature type="chain" id="PRO_1000025977" description="Photosystem II reaction center protein K" evidence="1">
    <location>
        <begin position="10"/>
        <end position="46"/>
    </location>
</feature>
<feature type="transmembrane region" description="Helical" evidence="1">
    <location>
        <begin position="25"/>
        <end position="45"/>
    </location>
</feature>
<sequence length="46" mass="5249">MLILFNTFAELPEAYKAFAPTVDVLPLIPLFFFLLVFVWQAAVGFK</sequence>
<reference key="1">
    <citation type="journal article" date="2007" name="PLoS Genet.">
        <title>Patterns and implications of gene gain and loss in the evolution of Prochlorococcus.</title>
        <authorList>
            <person name="Kettler G.C."/>
            <person name="Martiny A.C."/>
            <person name="Huang K."/>
            <person name="Zucker J."/>
            <person name="Coleman M.L."/>
            <person name="Rodrigue S."/>
            <person name="Chen F."/>
            <person name="Lapidus A."/>
            <person name="Ferriera S."/>
            <person name="Johnson J."/>
            <person name="Steglich C."/>
            <person name="Church G.M."/>
            <person name="Richardson P."/>
            <person name="Chisholm S.W."/>
        </authorList>
    </citation>
    <scope>NUCLEOTIDE SEQUENCE [LARGE SCALE GENOMIC DNA]</scope>
    <source>
        <strain>MIT 9301</strain>
    </source>
</reference>
<name>PSBK_PROM0</name>
<dbReference type="EMBL" id="CP000576">
    <property type="protein sequence ID" value="ABO16918.1"/>
    <property type="molecule type" value="Genomic_DNA"/>
</dbReference>
<dbReference type="RefSeq" id="WP_011375837.1">
    <property type="nucleotide sequence ID" value="NC_009091.1"/>
</dbReference>
<dbReference type="SMR" id="A3PAZ3"/>
<dbReference type="STRING" id="167546.P9301_02951"/>
<dbReference type="KEGG" id="pmg:P9301_02951"/>
<dbReference type="HOGENOM" id="CLU_174355_0_0_3"/>
<dbReference type="Proteomes" id="UP000001430">
    <property type="component" value="Chromosome"/>
</dbReference>
<dbReference type="GO" id="GO:0009539">
    <property type="term" value="C:photosystem II reaction center"/>
    <property type="evidence" value="ECO:0007669"/>
    <property type="project" value="InterPro"/>
</dbReference>
<dbReference type="GO" id="GO:0031676">
    <property type="term" value="C:plasma membrane-derived thylakoid membrane"/>
    <property type="evidence" value="ECO:0007669"/>
    <property type="project" value="UniProtKB-SubCell"/>
</dbReference>
<dbReference type="GO" id="GO:0015979">
    <property type="term" value="P:photosynthesis"/>
    <property type="evidence" value="ECO:0007669"/>
    <property type="project" value="UniProtKB-UniRule"/>
</dbReference>
<dbReference type="HAMAP" id="MF_00441">
    <property type="entry name" value="PSII_PsbK"/>
    <property type="match status" value="1"/>
</dbReference>
<dbReference type="InterPro" id="IPR003687">
    <property type="entry name" value="PSII_PsbK"/>
</dbReference>
<dbReference type="InterPro" id="IPR037270">
    <property type="entry name" value="PSII_PsbK_sf"/>
</dbReference>
<dbReference type="NCBIfam" id="NF002715">
    <property type="entry name" value="PRK02553.1"/>
    <property type="match status" value="1"/>
</dbReference>
<dbReference type="PANTHER" id="PTHR35325">
    <property type="match status" value="1"/>
</dbReference>
<dbReference type="PANTHER" id="PTHR35325:SF1">
    <property type="entry name" value="PHOTOSYSTEM II REACTION CENTER PROTEIN K"/>
    <property type="match status" value="1"/>
</dbReference>
<dbReference type="Pfam" id="PF02533">
    <property type="entry name" value="PsbK"/>
    <property type="match status" value="1"/>
</dbReference>
<dbReference type="SUPFAM" id="SSF161037">
    <property type="entry name" value="Photosystem II reaction center protein K, PsbK"/>
    <property type="match status" value="1"/>
</dbReference>